<comment type="function">
    <text evidence="1">Required for the development of induced thermotolerance.</text>
</comment>
<comment type="similarity">
    <text evidence="4">Belongs to the ClpA/ClpB family. ClpL subfamily.</text>
</comment>
<gene>
    <name type="primary">clpL</name>
    <name type="ordered locus">SAV2548</name>
</gene>
<evidence type="ECO:0000250" key="1"/>
<evidence type="ECO:0000255" key="2"/>
<evidence type="ECO:0000256" key="3">
    <source>
        <dbReference type="SAM" id="MobiDB-lite"/>
    </source>
</evidence>
<evidence type="ECO:0000305" key="4"/>
<organism>
    <name type="scientific">Staphylococcus aureus (strain Mu50 / ATCC 700699)</name>
    <dbReference type="NCBI Taxonomy" id="158878"/>
    <lineage>
        <taxon>Bacteria</taxon>
        <taxon>Bacillati</taxon>
        <taxon>Bacillota</taxon>
        <taxon>Bacilli</taxon>
        <taxon>Bacillales</taxon>
        <taxon>Staphylococcaceae</taxon>
        <taxon>Staphylococcus</taxon>
    </lineage>
</organism>
<keyword id="KW-0067">ATP-binding</keyword>
<keyword id="KW-0143">Chaperone</keyword>
<keyword id="KW-0547">Nucleotide-binding</keyword>
<proteinExistence type="inferred from homology"/>
<sequence>MNNGFFNSDFDSIFRRMMQDMQGSNQVGNKKYYINGKEVSPEELAQLTQQGSNQSAEQSAQAFQQAAQRQQGQQGGNGNYLEQIGRNLTQEARDGLLDPVIGRDKEIQETAEVLSRRTKNNPILVGEAGVGKTAIVEGLAQAIVEGNVPAAIKDKEIISVDISSLEAGTQYRGAFEENIQKLIEGVKSSQNAVLFFDEIHQIIGSGATGSDSGSKGLSDILKPALSRGEISIIGATTQDEYRNNILKDAALTRRFNEVLVNEPSAKDTVEILKGIREKFEEHHQVKLPDDVLKACVDLSIQYIPQRLLPDKAIDVLDITAAHLSAQSPAVDKVETEKRISELENDKRKAVSAEEYKKADDIQNEIKSLQDKLENSNGEHTAVATVHDISDTIQRLTGIPVSQMDDNDIERLKNISNRLRSKIIGQDQAVEMVSRAIRRNRAGFDDGNRPIGSFLFVGPTGVGKTELAKQLAIDLFGNKDALIRLDMSEYSDTTAVSKMIGTTAGYVGYDDNSNTLTEKVRRNPYSVILFDEIEKANPQILTLLLQVMDDGNLTDGQGNVINFKNTIIICTSNAGFGNGNDAEEKDIMHEMKKFFRPEFLNRFNGIVEFLHLDKDALQDIVNLLLDDVQVTLDKKGITMDVSQDAKDWLIEEGYDEELGARPLRRIVEQQVRDKITDYYLDHTDVKHVDIDVEDNELVVKGK</sequence>
<accession>Q99R88</accession>
<dbReference type="EMBL" id="BA000017">
    <property type="protein sequence ID" value="BAB58710.1"/>
    <property type="molecule type" value="Genomic_DNA"/>
</dbReference>
<dbReference type="RefSeq" id="WP_001058993.1">
    <property type="nucleotide sequence ID" value="NC_002758.2"/>
</dbReference>
<dbReference type="SMR" id="Q99R88"/>
<dbReference type="KEGG" id="sav:SAV2548"/>
<dbReference type="HOGENOM" id="CLU_005070_4_3_9"/>
<dbReference type="PhylomeDB" id="Q99R88"/>
<dbReference type="Proteomes" id="UP000002481">
    <property type="component" value="Chromosome"/>
</dbReference>
<dbReference type="GO" id="GO:0005737">
    <property type="term" value="C:cytoplasm"/>
    <property type="evidence" value="ECO:0007669"/>
    <property type="project" value="TreeGrafter"/>
</dbReference>
<dbReference type="GO" id="GO:0005524">
    <property type="term" value="F:ATP binding"/>
    <property type="evidence" value="ECO:0007669"/>
    <property type="project" value="UniProtKB-KW"/>
</dbReference>
<dbReference type="GO" id="GO:0016887">
    <property type="term" value="F:ATP hydrolysis activity"/>
    <property type="evidence" value="ECO:0007669"/>
    <property type="project" value="InterPro"/>
</dbReference>
<dbReference type="GO" id="GO:0034605">
    <property type="term" value="P:cellular response to heat"/>
    <property type="evidence" value="ECO:0007669"/>
    <property type="project" value="TreeGrafter"/>
</dbReference>
<dbReference type="CDD" id="cd00009">
    <property type="entry name" value="AAA"/>
    <property type="match status" value="1"/>
</dbReference>
<dbReference type="CDD" id="cd19499">
    <property type="entry name" value="RecA-like_ClpB_Hsp104-like"/>
    <property type="match status" value="1"/>
</dbReference>
<dbReference type="FunFam" id="3.40.50.300:FF:000025">
    <property type="entry name" value="ATP-dependent Clp protease subunit"/>
    <property type="match status" value="1"/>
</dbReference>
<dbReference type="Gene3D" id="1.10.8.60">
    <property type="match status" value="2"/>
</dbReference>
<dbReference type="Gene3D" id="3.40.50.300">
    <property type="entry name" value="P-loop containing nucleotide triphosphate hydrolases"/>
    <property type="match status" value="2"/>
</dbReference>
<dbReference type="Gene3D" id="4.10.860.10">
    <property type="entry name" value="UVR domain"/>
    <property type="match status" value="1"/>
</dbReference>
<dbReference type="InterPro" id="IPR003593">
    <property type="entry name" value="AAA+_ATPase"/>
</dbReference>
<dbReference type="InterPro" id="IPR003959">
    <property type="entry name" value="ATPase_AAA_core"/>
</dbReference>
<dbReference type="InterPro" id="IPR019489">
    <property type="entry name" value="Clp_ATPase_C"/>
</dbReference>
<dbReference type="InterPro" id="IPR001270">
    <property type="entry name" value="ClpA/B"/>
</dbReference>
<dbReference type="InterPro" id="IPR041546">
    <property type="entry name" value="ClpA/ClpB_AAA_lid"/>
</dbReference>
<dbReference type="InterPro" id="IPR050130">
    <property type="entry name" value="ClpA_ClpB"/>
</dbReference>
<dbReference type="InterPro" id="IPR027417">
    <property type="entry name" value="P-loop_NTPase"/>
</dbReference>
<dbReference type="PANTHER" id="PTHR11638">
    <property type="entry name" value="ATP-DEPENDENT CLP PROTEASE"/>
    <property type="match status" value="1"/>
</dbReference>
<dbReference type="PANTHER" id="PTHR11638:SF188">
    <property type="entry name" value="ATP-DEPENDENT CLP PROTEASE ATP-BINDING SUBUNIT CLPL"/>
    <property type="match status" value="1"/>
</dbReference>
<dbReference type="Pfam" id="PF00004">
    <property type="entry name" value="AAA"/>
    <property type="match status" value="1"/>
</dbReference>
<dbReference type="Pfam" id="PF07724">
    <property type="entry name" value="AAA_2"/>
    <property type="match status" value="1"/>
</dbReference>
<dbReference type="Pfam" id="PF17871">
    <property type="entry name" value="AAA_lid_9"/>
    <property type="match status" value="1"/>
</dbReference>
<dbReference type="Pfam" id="PF10431">
    <property type="entry name" value="ClpB_D2-small"/>
    <property type="match status" value="1"/>
</dbReference>
<dbReference type="PRINTS" id="PR00300">
    <property type="entry name" value="CLPPROTEASEA"/>
</dbReference>
<dbReference type="SMART" id="SM00382">
    <property type="entry name" value="AAA"/>
    <property type="match status" value="2"/>
</dbReference>
<dbReference type="SMART" id="SM01086">
    <property type="entry name" value="ClpB_D2-small"/>
    <property type="match status" value="1"/>
</dbReference>
<dbReference type="SUPFAM" id="SSF52540">
    <property type="entry name" value="P-loop containing nucleoside triphosphate hydrolases"/>
    <property type="match status" value="2"/>
</dbReference>
<reference key="1">
    <citation type="journal article" date="2001" name="Lancet">
        <title>Whole genome sequencing of meticillin-resistant Staphylococcus aureus.</title>
        <authorList>
            <person name="Kuroda M."/>
            <person name="Ohta T."/>
            <person name="Uchiyama I."/>
            <person name="Baba T."/>
            <person name="Yuzawa H."/>
            <person name="Kobayashi I."/>
            <person name="Cui L."/>
            <person name="Oguchi A."/>
            <person name="Aoki K."/>
            <person name="Nagai Y."/>
            <person name="Lian J.-Q."/>
            <person name="Ito T."/>
            <person name="Kanamori M."/>
            <person name="Matsumaru H."/>
            <person name="Maruyama A."/>
            <person name="Murakami H."/>
            <person name="Hosoyama A."/>
            <person name="Mizutani-Ui Y."/>
            <person name="Takahashi N.K."/>
            <person name="Sawano T."/>
            <person name="Inoue R."/>
            <person name="Kaito C."/>
            <person name="Sekimizu K."/>
            <person name="Hirakawa H."/>
            <person name="Kuhara S."/>
            <person name="Goto S."/>
            <person name="Yabuzaki J."/>
            <person name="Kanehisa M."/>
            <person name="Yamashita A."/>
            <person name="Oshima K."/>
            <person name="Furuya K."/>
            <person name="Yoshino C."/>
            <person name="Shiba T."/>
            <person name="Hattori M."/>
            <person name="Ogasawara N."/>
            <person name="Hayashi H."/>
            <person name="Hiramatsu K."/>
        </authorList>
    </citation>
    <scope>NUCLEOTIDE SEQUENCE [LARGE SCALE GENOMIC DNA]</scope>
    <source>
        <strain>Mu50 / ATCC 700699</strain>
    </source>
</reference>
<name>CLPL_STAAM</name>
<feature type="chain" id="PRO_0000269498" description="ATP-dependent Clp protease ATP-binding subunit ClpL">
    <location>
        <begin position="1"/>
        <end position="701"/>
    </location>
</feature>
<feature type="domain" description="UVR">
    <location>
        <begin position="336"/>
        <end position="371"/>
    </location>
</feature>
<feature type="region of interest" description="Disordered" evidence="3">
    <location>
        <begin position="45"/>
        <end position="81"/>
    </location>
</feature>
<feature type="region of interest" description="I">
    <location>
        <begin position="81"/>
        <end position="332"/>
    </location>
</feature>
<feature type="region of interest" description="II">
    <location>
        <begin position="383"/>
        <end position="575"/>
    </location>
</feature>
<feature type="compositionally biased region" description="Low complexity" evidence="3">
    <location>
        <begin position="49"/>
        <end position="72"/>
    </location>
</feature>
<feature type="binding site" evidence="2">
    <location>
        <begin position="126"/>
        <end position="133"/>
    </location>
    <ligand>
        <name>ATP</name>
        <dbReference type="ChEBI" id="CHEBI:30616"/>
    </ligand>
</feature>
<feature type="binding site" evidence="2">
    <location>
        <begin position="457"/>
        <end position="464"/>
    </location>
    <ligand>
        <name>ATP</name>
        <dbReference type="ChEBI" id="CHEBI:30616"/>
    </ligand>
</feature>
<protein>
    <recommendedName>
        <fullName>ATP-dependent Clp protease ATP-binding subunit ClpL</fullName>
    </recommendedName>
</protein>